<gene>
    <name evidence="7" type="primary">mgl</name>
    <name evidence="7" type="ordered locus">SAV_7062</name>
    <name evidence="7" type="ORF">SAVERM_7062</name>
</gene>
<keyword id="KW-0456">Lyase</keyword>
<keyword id="KW-0663">Pyridoxal phosphate</keyword>
<keyword id="KW-1185">Reference proteome</keyword>
<organism>
    <name type="scientific">Streptomyces avermitilis (strain ATCC 31267 / DSM 46492 / JCM 5070 / NBRC 14893 / NCIMB 12804 / NRRL 8165 / MA-4680)</name>
    <dbReference type="NCBI Taxonomy" id="227882"/>
    <lineage>
        <taxon>Bacteria</taxon>
        <taxon>Bacillati</taxon>
        <taxon>Actinomycetota</taxon>
        <taxon>Actinomycetes</taxon>
        <taxon>Kitasatosporales</taxon>
        <taxon>Streptomycetaceae</taxon>
        <taxon>Streptomyces</taxon>
    </lineage>
</organism>
<comment type="function">
    <text evidence="3">Catalyzes the alpha,gamma-elimination of L-methionine to produce methanethiol, 2-oxobutanoate and ammonia. Is probably involved in L-methionine catabolism. Is also able to catalyze the alpha,gamma-elimination of L-homocysteine, and, to a lesser extent, the alpha,beta-elimination of L-cysteine.</text>
</comment>
<comment type="catalytic activity">
    <reaction evidence="3">
        <text>L-methionine + H2O = methanethiol + 2-oxobutanoate + NH4(+)</text>
        <dbReference type="Rhea" id="RHEA:23800"/>
        <dbReference type="ChEBI" id="CHEBI:15377"/>
        <dbReference type="ChEBI" id="CHEBI:16007"/>
        <dbReference type="ChEBI" id="CHEBI:16763"/>
        <dbReference type="ChEBI" id="CHEBI:28938"/>
        <dbReference type="ChEBI" id="CHEBI:57844"/>
        <dbReference type="EC" id="4.4.1.11"/>
    </reaction>
</comment>
<comment type="catalytic activity">
    <reaction evidence="3">
        <text>L-homocysteine + H2O = 2-oxobutanoate + hydrogen sulfide + NH4(+) + H(+)</text>
        <dbReference type="Rhea" id="RHEA:14501"/>
        <dbReference type="ChEBI" id="CHEBI:15377"/>
        <dbReference type="ChEBI" id="CHEBI:15378"/>
        <dbReference type="ChEBI" id="CHEBI:16763"/>
        <dbReference type="ChEBI" id="CHEBI:28938"/>
        <dbReference type="ChEBI" id="CHEBI:29919"/>
        <dbReference type="ChEBI" id="CHEBI:58199"/>
        <dbReference type="EC" id="4.4.1.2"/>
    </reaction>
</comment>
<comment type="catalytic activity">
    <reaction evidence="3">
        <text>L-cysteine + H2O = hydrogen sulfide + pyruvate + NH4(+) + H(+)</text>
        <dbReference type="Rhea" id="RHEA:24931"/>
        <dbReference type="ChEBI" id="CHEBI:15361"/>
        <dbReference type="ChEBI" id="CHEBI:15377"/>
        <dbReference type="ChEBI" id="CHEBI:15378"/>
        <dbReference type="ChEBI" id="CHEBI:28938"/>
        <dbReference type="ChEBI" id="CHEBI:29919"/>
        <dbReference type="ChEBI" id="CHEBI:35235"/>
    </reaction>
</comment>
<comment type="cofactor">
    <cofactor evidence="6">
        <name>pyridoxal 5'-phosphate</name>
        <dbReference type="ChEBI" id="CHEBI:597326"/>
    </cofactor>
</comment>
<comment type="biophysicochemical properties">
    <kinetics>
        <KM evidence="3">1.6 mM for L-methionine</KM>
        <KM evidence="3">1.78 mM for L-homocysteine</KM>
        <KM evidence="3">0.2 mM for L-cysteine</KM>
        <text evidence="3">kcat is 2.90 sec(-1) for the alpha,gamma-elimination of L-methionine. kcat is 1.67 sec(-1) for the alpha,gamma-elimination of L-homocysteine. kcat is 0.03 sec(-1) for the alpha,beta-elimination of L-cysteine.</text>
    </kinetics>
</comment>
<comment type="subunit">
    <text evidence="1">Homotetramer; dimer of active dimers.</text>
</comment>
<comment type="similarity">
    <text evidence="5">Belongs to the trans-sulfuration enzymes family.</text>
</comment>
<dbReference type="EC" id="4.4.1.11" evidence="3"/>
<dbReference type="EC" id="4.4.1.2" evidence="3"/>
<dbReference type="EMBL" id="BA000030">
    <property type="protein sequence ID" value="BAC74773.1"/>
    <property type="molecule type" value="Genomic_DNA"/>
</dbReference>
<dbReference type="SMR" id="Q826W3"/>
<dbReference type="KEGG" id="sma:SAVERM_7062"/>
<dbReference type="eggNOG" id="COG0626">
    <property type="taxonomic scope" value="Bacteria"/>
</dbReference>
<dbReference type="HOGENOM" id="CLU_018986_2_0_11"/>
<dbReference type="OrthoDB" id="9780685at2"/>
<dbReference type="BRENDA" id="4.4.1.11">
    <property type="organism ID" value="5980"/>
</dbReference>
<dbReference type="Proteomes" id="UP000000428">
    <property type="component" value="Chromosome"/>
</dbReference>
<dbReference type="GO" id="GO:0005737">
    <property type="term" value="C:cytoplasm"/>
    <property type="evidence" value="ECO:0007669"/>
    <property type="project" value="TreeGrafter"/>
</dbReference>
<dbReference type="GO" id="GO:0004123">
    <property type="term" value="F:cystathionine gamma-lyase activity"/>
    <property type="evidence" value="ECO:0007669"/>
    <property type="project" value="TreeGrafter"/>
</dbReference>
<dbReference type="GO" id="GO:0047982">
    <property type="term" value="F:homocysteine desulfhydrase activity"/>
    <property type="evidence" value="ECO:0007669"/>
    <property type="project" value="UniProtKB-EC"/>
</dbReference>
<dbReference type="GO" id="GO:0080146">
    <property type="term" value="F:L-cysteine desulfhydrase activity"/>
    <property type="evidence" value="ECO:0007669"/>
    <property type="project" value="RHEA"/>
</dbReference>
<dbReference type="GO" id="GO:0018826">
    <property type="term" value="F:methionine gamma-lyase activity"/>
    <property type="evidence" value="ECO:0007669"/>
    <property type="project" value="UniProtKB-EC"/>
</dbReference>
<dbReference type="GO" id="GO:0030170">
    <property type="term" value="F:pyridoxal phosphate binding"/>
    <property type="evidence" value="ECO:0007669"/>
    <property type="project" value="InterPro"/>
</dbReference>
<dbReference type="GO" id="GO:0019343">
    <property type="term" value="P:cysteine biosynthetic process via cystathionine"/>
    <property type="evidence" value="ECO:0007669"/>
    <property type="project" value="TreeGrafter"/>
</dbReference>
<dbReference type="GO" id="GO:0019346">
    <property type="term" value="P:transsulfuration"/>
    <property type="evidence" value="ECO:0007669"/>
    <property type="project" value="InterPro"/>
</dbReference>
<dbReference type="FunFam" id="3.40.640.10:FF:000061">
    <property type="entry name" value="Cystathionine gamma-synthase"/>
    <property type="match status" value="1"/>
</dbReference>
<dbReference type="Gene3D" id="3.90.1150.10">
    <property type="entry name" value="Aspartate Aminotransferase, domain 1"/>
    <property type="match status" value="1"/>
</dbReference>
<dbReference type="Gene3D" id="3.40.640.10">
    <property type="entry name" value="Type I PLP-dependent aspartate aminotransferase-like (Major domain)"/>
    <property type="match status" value="1"/>
</dbReference>
<dbReference type="InterPro" id="IPR000277">
    <property type="entry name" value="Cys/Met-Metab_PyrdxlP-dep_enz"/>
</dbReference>
<dbReference type="InterPro" id="IPR015424">
    <property type="entry name" value="PyrdxlP-dep_Trfase"/>
</dbReference>
<dbReference type="InterPro" id="IPR015421">
    <property type="entry name" value="PyrdxlP-dep_Trfase_major"/>
</dbReference>
<dbReference type="InterPro" id="IPR015422">
    <property type="entry name" value="PyrdxlP-dep_Trfase_small"/>
</dbReference>
<dbReference type="PANTHER" id="PTHR11808:SF85">
    <property type="entry name" value="CYSTATHIONINE GAMMA-LYASE-RELATED"/>
    <property type="match status" value="1"/>
</dbReference>
<dbReference type="PANTHER" id="PTHR11808">
    <property type="entry name" value="TRANS-SULFURATION ENZYME FAMILY MEMBER"/>
    <property type="match status" value="1"/>
</dbReference>
<dbReference type="Pfam" id="PF01053">
    <property type="entry name" value="Cys_Met_Meta_PP"/>
    <property type="match status" value="1"/>
</dbReference>
<dbReference type="PIRSF" id="PIRSF001434">
    <property type="entry name" value="CGS"/>
    <property type="match status" value="1"/>
</dbReference>
<dbReference type="SUPFAM" id="SSF53383">
    <property type="entry name" value="PLP-dependent transferases"/>
    <property type="match status" value="1"/>
</dbReference>
<protein>
    <recommendedName>
        <fullName evidence="4">L-methionine gamma-lyase</fullName>
        <shortName evidence="4">MGL</shortName>
        <ecNumber evidence="3">4.4.1.11</ecNumber>
    </recommendedName>
    <alternativeName>
        <fullName evidence="6">Homocysteine desulfhydrase</fullName>
        <ecNumber evidence="3">4.4.1.2</ecNumber>
    </alternativeName>
</protein>
<reference key="1">
    <citation type="journal article" date="2001" name="Proc. Natl. Acad. Sci. U.S.A.">
        <title>Genome sequence of an industrial microorganism Streptomyces avermitilis: deducing the ability of producing secondary metabolites.</title>
        <authorList>
            <person name="Omura S."/>
            <person name="Ikeda H."/>
            <person name="Ishikawa J."/>
            <person name="Hanamoto A."/>
            <person name="Takahashi C."/>
            <person name="Shinose M."/>
            <person name="Takahashi Y."/>
            <person name="Horikawa H."/>
            <person name="Nakazawa H."/>
            <person name="Osonoe T."/>
            <person name="Kikuchi H."/>
            <person name="Shiba T."/>
            <person name="Sakaki Y."/>
            <person name="Hattori M."/>
        </authorList>
    </citation>
    <scope>NUCLEOTIDE SEQUENCE [LARGE SCALE GENOMIC DNA]</scope>
    <source>
        <strain evidence="8">ATCC 31267 / DSM 46492 / JCM 5070 / NBRC 14893 / NCIMB 12804 / NRRL 8165 / MA-4680</strain>
    </source>
</reference>
<reference key="2">
    <citation type="journal article" date="2003" name="Nat. Biotechnol.">
        <title>Complete genome sequence and comparative analysis of the industrial microorganism Streptomyces avermitilis.</title>
        <authorList>
            <person name="Ikeda H."/>
            <person name="Ishikawa J."/>
            <person name="Hanamoto A."/>
            <person name="Shinose M."/>
            <person name="Kikuchi H."/>
            <person name="Shiba T."/>
            <person name="Sakaki Y."/>
            <person name="Hattori M."/>
            <person name="Omura S."/>
        </authorList>
    </citation>
    <scope>NUCLEOTIDE SEQUENCE [LARGE SCALE GENOMIC DNA]</scope>
    <source>
        <strain evidence="8">ATCC 31267 / DSM 46492 / JCM 5070 / NBRC 14893 / NCIMB 12804 / NRRL 8165 / MA-4680</strain>
    </source>
</reference>
<reference key="3">
    <citation type="journal article" date="2015" name="J. Biosci. Bioeng.">
        <title>Molecular cloning and characterization of L-methionine gamma-lyase from Streptomyces avermitilis.</title>
        <authorList>
            <person name="Kudou D."/>
            <person name="Yasuda E."/>
            <person name="Hirai Y."/>
            <person name="Tamura T."/>
            <person name="Inagaki K."/>
        </authorList>
    </citation>
    <scope>FUNCTION</scope>
    <scope>CATALYTIC ACTIVITY</scope>
    <scope>COFACTOR</scope>
    <scope>BIOPHYSICOCHEMICAL PROPERTIES</scope>
    <scope>SUBSTRATE SPECIFICITY</scope>
</reference>
<name>MEGL_STRAW</name>
<proteinExistence type="evidence at protein level"/>
<evidence type="ECO:0000250" key="1">
    <source>
        <dbReference type="UniProtKB" id="P13254"/>
    </source>
</evidence>
<evidence type="ECO:0000256" key="2">
    <source>
        <dbReference type="SAM" id="MobiDB-lite"/>
    </source>
</evidence>
<evidence type="ECO:0000269" key="3">
    <source>
    </source>
</evidence>
<evidence type="ECO:0000303" key="4">
    <source>
    </source>
</evidence>
<evidence type="ECO:0000305" key="5"/>
<evidence type="ECO:0000305" key="6">
    <source>
    </source>
</evidence>
<evidence type="ECO:0000312" key="7">
    <source>
        <dbReference type="EMBL" id="BAC74773.1"/>
    </source>
</evidence>
<evidence type="ECO:0000312" key="8">
    <source>
        <dbReference type="Proteomes" id="UP000000428"/>
    </source>
</evidence>
<sequence>MDDGRGAGGFGGGPAVRALDTEAVHAGRDDLARQGLHAAPIDLSTTYPSYDSRAEAARIDAFAADGAEPAGPPVYGRLGNPTVARFETALARLEGTDSAVAFASGMAALSAVLLVRNAMGLRHVVAVRPLYGCSDHLLTAGLLGSEVTWVDPAGVADALRPDTGLVMVESPANPTLAELDLRALAHACGSVPLLADNTFATPVLQRPAEHGARLVLHSATKYLGGHGDVMAGVVACDEEFARGLRQIRFATGGVLHPLAGYLLLRGLSTLPIRVRAASSNAAELARRLAADPRVARVHYPRIGGAMIAFEVYGDPHEVIAGVRLITPAVSLGSVDSLIQHPASISHRIVDAADRRGAGVSDRLLRLSVGLEDVEDLWADLDGALGTDRLPETAGAGREPSRTALRLPERAADR</sequence>
<accession>Q826W3</accession>
<feature type="chain" id="PRO_0000443073" description="L-methionine gamma-lyase">
    <location>
        <begin position="1"/>
        <end position="413"/>
    </location>
</feature>
<feature type="region of interest" description="Disordered" evidence="2">
    <location>
        <begin position="388"/>
        <end position="413"/>
    </location>
</feature>
<feature type="binding site" evidence="1">
    <location>
        <begin position="75"/>
        <end position="77"/>
    </location>
    <ligand>
        <name>pyridoxal 5'-phosphate</name>
        <dbReference type="ChEBI" id="CHEBI:597326"/>
        <note>ligand shared between dimeric partners</note>
    </ligand>
</feature>
<feature type="binding site" description="in other chain" evidence="1">
    <location>
        <begin position="105"/>
        <end position="106"/>
    </location>
    <ligand>
        <name>pyridoxal 5'-phosphate</name>
        <dbReference type="ChEBI" id="CHEBI:597326"/>
        <note>ligand shared between dimeric partners</note>
    </ligand>
</feature>
<feature type="binding site" evidence="1">
    <location>
        <position position="131"/>
    </location>
    <ligand>
        <name>substrate</name>
    </ligand>
</feature>
<feature type="binding site" description="in other chain" evidence="1">
    <location>
        <begin position="218"/>
        <end position="220"/>
    </location>
    <ligand>
        <name>pyridoxal 5'-phosphate</name>
        <dbReference type="ChEBI" id="CHEBI:597326"/>
        <note>ligand shared between dimeric partners</note>
    </ligand>
</feature>
<feature type="binding site" evidence="1">
    <location>
        <position position="365"/>
    </location>
    <ligand>
        <name>substrate</name>
    </ligand>
</feature>
<feature type="modified residue" description="N6-(pyridoxal phosphate)lysine" evidence="1">
    <location>
        <position position="221"/>
    </location>
</feature>